<gene>
    <name type="ordered locus">CPR_1677</name>
</gene>
<comment type="similarity">
    <text evidence="1">Belongs to the UPF0102 family.</text>
</comment>
<evidence type="ECO:0000255" key="1">
    <source>
        <dbReference type="HAMAP-Rule" id="MF_00048"/>
    </source>
</evidence>
<dbReference type="EMBL" id="CP000312">
    <property type="protein sequence ID" value="ABG86536.1"/>
    <property type="molecule type" value="Genomic_DNA"/>
</dbReference>
<dbReference type="RefSeq" id="WP_011592603.1">
    <property type="nucleotide sequence ID" value="NC_008262.1"/>
</dbReference>
<dbReference type="SMR" id="Q0SSB5"/>
<dbReference type="KEGG" id="cpr:CPR_1677"/>
<dbReference type="BioCyc" id="CPER289380:GI76-1688-MONOMER"/>
<dbReference type="Proteomes" id="UP000001824">
    <property type="component" value="Chromosome"/>
</dbReference>
<dbReference type="GO" id="GO:0003676">
    <property type="term" value="F:nucleic acid binding"/>
    <property type="evidence" value="ECO:0007669"/>
    <property type="project" value="InterPro"/>
</dbReference>
<dbReference type="CDD" id="cd20736">
    <property type="entry name" value="PoNe_Nuclease"/>
    <property type="match status" value="1"/>
</dbReference>
<dbReference type="Gene3D" id="3.40.1350.10">
    <property type="match status" value="1"/>
</dbReference>
<dbReference type="HAMAP" id="MF_00048">
    <property type="entry name" value="UPF0102"/>
    <property type="match status" value="1"/>
</dbReference>
<dbReference type="InterPro" id="IPR011335">
    <property type="entry name" value="Restrct_endonuc-II-like"/>
</dbReference>
<dbReference type="InterPro" id="IPR011856">
    <property type="entry name" value="tRNA_endonuc-like_dom_sf"/>
</dbReference>
<dbReference type="InterPro" id="IPR003509">
    <property type="entry name" value="UPF0102_YraN-like"/>
</dbReference>
<dbReference type="NCBIfam" id="NF009150">
    <property type="entry name" value="PRK12497.1-3"/>
    <property type="match status" value="1"/>
</dbReference>
<dbReference type="NCBIfam" id="TIGR00252">
    <property type="entry name" value="YraN family protein"/>
    <property type="match status" value="1"/>
</dbReference>
<dbReference type="PANTHER" id="PTHR34039">
    <property type="entry name" value="UPF0102 PROTEIN YRAN"/>
    <property type="match status" value="1"/>
</dbReference>
<dbReference type="PANTHER" id="PTHR34039:SF1">
    <property type="entry name" value="UPF0102 PROTEIN YRAN"/>
    <property type="match status" value="1"/>
</dbReference>
<dbReference type="Pfam" id="PF02021">
    <property type="entry name" value="UPF0102"/>
    <property type="match status" value="1"/>
</dbReference>
<dbReference type="SUPFAM" id="SSF52980">
    <property type="entry name" value="Restriction endonuclease-like"/>
    <property type="match status" value="1"/>
</dbReference>
<organism>
    <name type="scientific">Clostridium perfringens (strain SM101 / Type A)</name>
    <dbReference type="NCBI Taxonomy" id="289380"/>
    <lineage>
        <taxon>Bacteria</taxon>
        <taxon>Bacillati</taxon>
        <taxon>Bacillota</taxon>
        <taxon>Clostridia</taxon>
        <taxon>Eubacteriales</taxon>
        <taxon>Clostridiaceae</taxon>
        <taxon>Clostridium</taxon>
    </lineage>
</organism>
<protein>
    <recommendedName>
        <fullName evidence="1">UPF0102 protein CPR_1677</fullName>
    </recommendedName>
</protein>
<accession>Q0SSB5</accession>
<sequence>MKKYNKSIGFYGEDLSAKFLEKDGYSILEKNFNCSSGEIDIIAIKDEIISFIEVKSRFSDSFGKPKESVTCSKQGRIINAAKYYLHIKKLYNYYIRFDVIEINFHIDSSKYELSFLKDAFRV</sequence>
<reference key="1">
    <citation type="journal article" date="2006" name="Genome Res.">
        <title>Skewed genomic variability in strains of the toxigenic bacterial pathogen, Clostridium perfringens.</title>
        <authorList>
            <person name="Myers G.S.A."/>
            <person name="Rasko D.A."/>
            <person name="Cheung J.K."/>
            <person name="Ravel J."/>
            <person name="Seshadri R."/>
            <person name="DeBoy R.T."/>
            <person name="Ren Q."/>
            <person name="Varga J."/>
            <person name="Awad M.M."/>
            <person name="Brinkac L.M."/>
            <person name="Daugherty S.C."/>
            <person name="Haft D.H."/>
            <person name="Dodson R.J."/>
            <person name="Madupu R."/>
            <person name="Nelson W.C."/>
            <person name="Rosovitz M.J."/>
            <person name="Sullivan S.A."/>
            <person name="Khouri H."/>
            <person name="Dimitrov G.I."/>
            <person name="Watkins K.L."/>
            <person name="Mulligan S."/>
            <person name="Benton J."/>
            <person name="Radune D."/>
            <person name="Fisher D.J."/>
            <person name="Atkins H.S."/>
            <person name="Hiscox T."/>
            <person name="Jost B.H."/>
            <person name="Billington S.J."/>
            <person name="Songer J.G."/>
            <person name="McClane B.A."/>
            <person name="Titball R.W."/>
            <person name="Rood J.I."/>
            <person name="Melville S.B."/>
            <person name="Paulsen I.T."/>
        </authorList>
    </citation>
    <scope>NUCLEOTIDE SEQUENCE [LARGE SCALE GENOMIC DNA]</scope>
    <source>
        <strain>SM101 / Type A</strain>
    </source>
</reference>
<feature type="chain" id="PRO_1000009207" description="UPF0102 protein CPR_1677">
    <location>
        <begin position="1"/>
        <end position="122"/>
    </location>
</feature>
<proteinExistence type="inferred from homology"/>
<name>Y1677_CLOPS</name>